<reference key="1">
    <citation type="journal article" date="1997" name="Nature">
        <title>The complete genome sequence of the Gram-positive bacterium Bacillus subtilis.</title>
        <authorList>
            <person name="Kunst F."/>
            <person name="Ogasawara N."/>
            <person name="Moszer I."/>
            <person name="Albertini A.M."/>
            <person name="Alloni G."/>
            <person name="Azevedo V."/>
            <person name="Bertero M.G."/>
            <person name="Bessieres P."/>
            <person name="Bolotin A."/>
            <person name="Borchert S."/>
            <person name="Borriss R."/>
            <person name="Boursier L."/>
            <person name="Brans A."/>
            <person name="Braun M."/>
            <person name="Brignell S.C."/>
            <person name="Bron S."/>
            <person name="Brouillet S."/>
            <person name="Bruschi C.V."/>
            <person name="Caldwell B."/>
            <person name="Capuano V."/>
            <person name="Carter N.M."/>
            <person name="Choi S.-K."/>
            <person name="Codani J.-J."/>
            <person name="Connerton I.F."/>
            <person name="Cummings N.J."/>
            <person name="Daniel R.A."/>
            <person name="Denizot F."/>
            <person name="Devine K.M."/>
            <person name="Duesterhoeft A."/>
            <person name="Ehrlich S.D."/>
            <person name="Emmerson P.T."/>
            <person name="Entian K.-D."/>
            <person name="Errington J."/>
            <person name="Fabret C."/>
            <person name="Ferrari E."/>
            <person name="Foulger D."/>
            <person name="Fritz C."/>
            <person name="Fujita M."/>
            <person name="Fujita Y."/>
            <person name="Fuma S."/>
            <person name="Galizzi A."/>
            <person name="Galleron N."/>
            <person name="Ghim S.-Y."/>
            <person name="Glaser P."/>
            <person name="Goffeau A."/>
            <person name="Golightly E.J."/>
            <person name="Grandi G."/>
            <person name="Guiseppi G."/>
            <person name="Guy B.J."/>
            <person name="Haga K."/>
            <person name="Haiech J."/>
            <person name="Harwood C.R."/>
            <person name="Henaut A."/>
            <person name="Hilbert H."/>
            <person name="Holsappel S."/>
            <person name="Hosono S."/>
            <person name="Hullo M.-F."/>
            <person name="Itaya M."/>
            <person name="Jones L.-M."/>
            <person name="Joris B."/>
            <person name="Karamata D."/>
            <person name="Kasahara Y."/>
            <person name="Klaerr-Blanchard M."/>
            <person name="Klein C."/>
            <person name="Kobayashi Y."/>
            <person name="Koetter P."/>
            <person name="Koningstein G."/>
            <person name="Krogh S."/>
            <person name="Kumano M."/>
            <person name="Kurita K."/>
            <person name="Lapidus A."/>
            <person name="Lardinois S."/>
            <person name="Lauber J."/>
            <person name="Lazarevic V."/>
            <person name="Lee S.-M."/>
            <person name="Levine A."/>
            <person name="Liu H."/>
            <person name="Masuda S."/>
            <person name="Mauel C."/>
            <person name="Medigue C."/>
            <person name="Medina N."/>
            <person name="Mellado R.P."/>
            <person name="Mizuno M."/>
            <person name="Moestl D."/>
            <person name="Nakai S."/>
            <person name="Noback M."/>
            <person name="Noone D."/>
            <person name="O'Reilly M."/>
            <person name="Ogawa K."/>
            <person name="Ogiwara A."/>
            <person name="Oudega B."/>
            <person name="Park S.-H."/>
            <person name="Parro V."/>
            <person name="Pohl T.M."/>
            <person name="Portetelle D."/>
            <person name="Porwollik S."/>
            <person name="Prescott A.M."/>
            <person name="Presecan E."/>
            <person name="Pujic P."/>
            <person name="Purnelle B."/>
            <person name="Rapoport G."/>
            <person name="Rey M."/>
            <person name="Reynolds S."/>
            <person name="Rieger M."/>
            <person name="Rivolta C."/>
            <person name="Rocha E."/>
            <person name="Roche B."/>
            <person name="Rose M."/>
            <person name="Sadaie Y."/>
            <person name="Sato T."/>
            <person name="Scanlan E."/>
            <person name="Schleich S."/>
            <person name="Schroeter R."/>
            <person name="Scoffone F."/>
            <person name="Sekiguchi J."/>
            <person name="Sekowska A."/>
            <person name="Seror S.J."/>
            <person name="Serror P."/>
            <person name="Shin B.-S."/>
            <person name="Soldo B."/>
            <person name="Sorokin A."/>
            <person name="Tacconi E."/>
            <person name="Takagi T."/>
            <person name="Takahashi H."/>
            <person name="Takemaru K."/>
            <person name="Takeuchi M."/>
            <person name="Tamakoshi A."/>
            <person name="Tanaka T."/>
            <person name="Terpstra P."/>
            <person name="Tognoni A."/>
            <person name="Tosato V."/>
            <person name="Uchiyama S."/>
            <person name="Vandenbol M."/>
            <person name="Vannier F."/>
            <person name="Vassarotti A."/>
            <person name="Viari A."/>
            <person name="Wambutt R."/>
            <person name="Wedler E."/>
            <person name="Wedler H."/>
            <person name="Weitzenegger T."/>
            <person name="Winters P."/>
            <person name="Wipat A."/>
            <person name="Yamamoto H."/>
            <person name="Yamane K."/>
            <person name="Yasumoto K."/>
            <person name="Yata K."/>
            <person name="Yoshida K."/>
            <person name="Yoshikawa H.-F."/>
            <person name="Zumstein E."/>
            <person name="Yoshikawa H."/>
            <person name="Danchin A."/>
        </authorList>
    </citation>
    <scope>NUCLEOTIDE SEQUENCE [LARGE SCALE GENOMIC DNA]</scope>
    <source>
        <strain>168</strain>
    </source>
</reference>
<reference key="2">
    <citation type="journal article" date="1998" name="FEBS Lett.">
        <title>Purification and characterization of a novel glycine oxidase from Bacillus subtilis.</title>
        <authorList>
            <person name="Nishiya Y."/>
            <person name="Imanaka T."/>
        </authorList>
    </citation>
    <scope>FUNCTION</scope>
    <scope>CATALYTIC ACTIVITY</scope>
    <scope>SUBSTRATE SPECIFICITY</scope>
    <scope>BIOPHYSICOCHEMICAL PROPERTIES</scope>
    <scope>SUBUNIT</scope>
    <source>
        <strain>MT-2</strain>
    </source>
</reference>
<reference key="3">
    <citation type="journal article" date="2002" name="J. Biol. Chem.">
        <title>Glycine oxidase from Bacillus subtilis. Characterization of a new flavoprotein.</title>
        <authorList>
            <person name="Job V."/>
            <person name="Marcone G.L."/>
            <person name="Pilone M.S."/>
            <person name="Pollegioni L."/>
        </authorList>
    </citation>
    <scope>FUNCTION</scope>
    <scope>CATALYTIC ACTIVITY</scope>
    <scope>SUBSTRATE SPECIFICITY</scope>
    <scope>COFACTOR</scope>
    <scope>ACTIVITY REGULATION</scope>
</reference>
<reference key="4">
    <citation type="journal article" date="2003" name="Biochemistry">
        <title>Structural and mechanistic studies on ThiO, a glycine oxidase essential for thiamin biosynthesis in Bacillus subtilis.</title>
        <authorList>
            <person name="Settembre E.C."/>
            <person name="Dorrestein P.C."/>
            <person name="Park J.-H."/>
            <person name="Augustine A.M."/>
            <person name="Begley T.P."/>
            <person name="Ealick S.E."/>
        </authorList>
    </citation>
    <scope>X-RAY CRYSTALLOGRAPHY (2.3 ANGSTROMS) IN COMPLEX WITH FAD AND N-ACETYLGLYCINE</scope>
    <scope>FUNCTION IN THIAMINE BIOSYNTHESIS</scope>
    <scope>PATHWAY</scope>
    <scope>DISRUPTION PHENOTYPE</scope>
    <scope>SUBUNIT</scope>
</reference>
<reference key="5">
    <citation type="journal article" date="2004" name="J. Biol. Chem.">
        <title>Structure-function correlation in glycine oxidase from Bacillus subtilis.</title>
        <authorList>
            <person name="Moertl M."/>
            <person name="Diederichs K."/>
            <person name="Welte W."/>
            <person name="Molla G."/>
            <person name="Motteran L."/>
            <person name="Andriolo G."/>
            <person name="Pilone M.S."/>
            <person name="Pollegioni L."/>
        </authorList>
    </citation>
    <scope>X-RAY CRYSTALLOGRAPHY (1.8 ANGSTROMS) IN COMPLEXES WITH GLYCOLATE AND FAD</scope>
    <scope>SUBUNIT</scope>
</reference>
<reference key="6">
    <citation type="journal article" date="2009" name="J. Biol. Chem.">
        <title>Glyphosate resistance by engineering the flavoenzyme glycine oxidase.</title>
        <authorList>
            <person name="Pedotti M."/>
            <person name="Rosini E."/>
            <person name="Molla G."/>
            <person name="Moschetti T."/>
            <person name="Savino C."/>
            <person name="Vallone B."/>
            <person name="Pollegioni L."/>
        </authorList>
    </citation>
    <scope>X-RAY CRYSTALLOGRAPHY (2.6 ANGSTROMS) OF MUTANT SER-51/ARG-54/ALA-244 IN COMPLEX WITH GLYCOLATE AND FAD</scope>
    <scope>FUNCTION</scope>
    <scope>CATALYTIC ACTIVITY</scope>
    <scope>SUBSTRATE SPECIFICITY</scope>
    <scope>KINETIC PARAMETERS</scope>
    <scope>SUBUNIT</scope>
    <scope>BIOTECHNOLOGY</scope>
    <scope>MUTAGENESIS OF GLY-51; ALA-54 AND HIS-244</scope>
</reference>
<comment type="function">
    <text evidence="1 2 4 5">Catalyzes the FAD-dependent oxidative deamination of various amines and D-amino acids to yield the corresponding alpha-keto acids, ammonia/amine, and hydrogen peroxide. Oxidizes sarcosine (N-methylglycine), N-ethylglycine and glycine (PubMed:11744710, PubMed:19864430, PubMed:9827558). Can also oxidize the herbicide glyphosate (N-phosphonomethylglycine) (PubMed:19864430). Displays lower activities on D-alanine, D-valine, D-proline and D-methionine (PubMed:11744710, PubMed:9827558). Does not act on L-amino acids and other D-amino acids (PubMed:9827558). Is essential for thiamine biosynthesis since the oxidation of glycine catalyzed by ThiO generates the glycine imine intermediate (dehydroglycine) required for the biosynthesis of the thiazole ring of thiamine pyrophosphate (PubMed:12627963).</text>
</comment>
<comment type="catalytic activity">
    <reaction evidence="1 4 5">
        <text>glycine + O2 + H2O = glyoxylate + H2O2 + NH4(+)</text>
        <dbReference type="Rhea" id="RHEA:11532"/>
        <dbReference type="ChEBI" id="CHEBI:15377"/>
        <dbReference type="ChEBI" id="CHEBI:15379"/>
        <dbReference type="ChEBI" id="CHEBI:16240"/>
        <dbReference type="ChEBI" id="CHEBI:28938"/>
        <dbReference type="ChEBI" id="CHEBI:36655"/>
        <dbReference type="ChEBI" id="CHEBI:57305"/>
        <dbReference type="EC" id="1.4.3.19"/>
    </reaction>
</comment>
<comment type="catalytic activity">
    <reaction evidence="1 4 5">
        <text>N-ethylglycine + O2 + H2O = ethylamine + glyoxylate + H2O2</text>
        <dbReference type="Rhea" id="RHEA:12472"/>
        <dbReference type="ChEBI" id="CHEBI:15377"/>
        <dbReference type="ChEBI" id="CHEBI:15379"/>
        <dbReference type="ChEBI" id="CHEBI:16240"/>
        <dbReference type="ChEBI" id="CHEBI:36655"/>
        <dbReference type="ChEBI" id="CHEBI:57440"/>
        <dbReference type="ChEBI" id="CHEBI:566789"/>
        <dbReference type="EC" id="1.4.3.19"/>
    </reaction>
</comment>
<comment type="catalytic activity">
    <reaction evidence="1 4 5">
        <text>sarcosine + O2 + H2O = methylamine + glyoxylate + H2O2</text>
        <dbReference type="Rhea" id="RHEA:15165"/>
        <dbReference type="ChEBI" id="CHEBI:15377"/>
        <dbReference type="ChEBI" id="CHEBI:15379"/>
        <dbReference type="ChEBI" id="CHEBI:16240"/>
        <dbReference type="ChEBI" id="CHEBI:36655"/>
        <dbReference type="ChEBI" id="CHEBI:57433"/>
        <dbReference type="ChEBI" id="CHEBI:59338"/>
        <dbReference type="EC" id="1.4.3.19"/>
    </reaction>
</comment>
<comment type="catalytic activity">
    <reaction evidence="1 4 5">
        <text>D-alanine + O2 + H2O = pyruvate + H2O2 + NH4(+)</text>
        <dbReference type="Rhea" id="RHEA:22688"/>
        <dbReference type="ChEBI" id="CHEBI:15361"/>
        <dbReference type="ChEBI" id="CHEBI:15377"/>
        <dbReference type="ChEBI" id="CHEBI:15379"/>
        <dbReference type="ChEBI" id="CHEBI:16240"/>
        <dbReference type="ChEBI" id="CHEBI:28938"/>
        <dbReference type="ChEBI" id="CHEBI:57416"/>
        <dbReference type="EC" id="1.4.3.19"/>
    </reaction>
</comment>
<comment type="catalytic activity">
    <reaction evidence="4">
        <text>glyphosate + O2 + H2O = aminomethylphosphonate + glyoxylate + H2O2 + H(+)</text>
        <dbReference type="Rhea" id="RHEA:52740"/>
        <dbReference type="ChEBI" id="CHEBI:15377"/>
        <dbReference type="ChEBI" id="CHEBI:15378"/>
        <dbReference type="ChEBI" id="CHEBI:15379"/>
        <dbReference type="ChEBI" id="CHEBI:16240"/>
        <dbReference type="ChEBI" id="CHEBI:36655"/>
        <dbReference type="ChEBI" id="CHEBI:133673"/>
        <dbReference type="ChEBI" id="CHEBI:133674"/>
    </reaction>
</comment>
<comment type="cofactor">
    <cofactor evidence="1">
        <name>FAD</name>
        <dbReference type="ChEBI" id="CHEBI:57692"/>
    </cofactor>
    <text evidence="1">Binds 1 FAD per subunit.</text>
</comment>
<comment type="activity regulation">
    <text evidence="1">Is competitively inhibited by glycolate.</text>
</comment>
<comment type="biophysicochemical properties">
    <kinetics>
        <KM evidence="5">0.22 mM for sarcosine (at pH 8.0)</KM>
        <KM evidence="5">0.66 mM for N-ethylglycine (at pH 8.0)</KM>
        <KM evidence="5">0.99 mM for glycine (at pH 8.0)</KM>
        <KM evidence="5">46 mM for D-proline (at pH 8.0)</KM>
        <KM evidence="5">81 mM for D-alanine (at pH 8.0)</KM>
        <KM evidence="4">0.7 mM for glycine (at pH 8.5 and 37 degrees Celsius)</KM>
        <KM evidence="4">87 mM for glyphosate (at pH 8.5 and 37 degrees Celsius)</KM>
        <text evidence="4 5">kcat is 1.3 sec(-1) with glycine as substrate. kcat is 1.6 sec(-1) with sarcosine as substrate. kcat is 1.4 sec(-1) with N-ethylglycine as substrate. kcat is 1.3 sec(-1) with D-proline as substrate. kcat is 1.1 sec(-1) with D-alanine as substrate (at pH 8.0) (PubMed:9827558). kcat is 0.60 sec(-1) with glycine as substrate. kcat is 0.91 sec(-1) with glyphosate as substrate (at pH 8.5 and 37 degrees Celsius) (PubMed:19864430).</text>
    </kinetics>
    <phDependence>
        <text evidence="5">Optimum pH is 8.0.</text>
    </phDependence>
    <temperatureDependence>
        <text evidence="5">Optimum temperature is 45 degrees Celsius.</text>
    </temperatureDependence>
</comment>
<comment type="pathway">
    <text evidence="2">Cofactor biosynthesis; thiamine diphosphate biosynthesis.</text>
</comment>
<comment type="subunit">
    <text evidence="2 3 4 5">Homotetramer.</text>
</comment>
<comment type="subcellular location">
    <subcellularLocation>
        <location evidence="9">Cytoplasm</location>
    </subcellularLocation>
</comment>
<comment type="disruption phenotype">
    <text evidence="2">Cells lacking this gene have an absolute requirement for the thiazole alcohol for growth.</text>
</comment>
<comment type="biotechnology">
    <text evidence="10">Introducing the gene coding for the glycine oxidase mutant Ser-51/Arg-54/Ala-244 in plants may be an effective alternative mechanism for glyphosate tolerance in transgenic crops. In addition, transgenic plants that are able to oxidize glyphosate may represent an innovative bioremediation system for the soil treated with this herbicide.</text>
</comment>
<comment type="similarity">
    <text evidence="9">Belongs to the DAO family. ThiO subfamily.</text>
</comment>
<feature type="chain" id="PRO_0000162773" description="Glycine oxidase">
    <location>
        <begin position="1"/>
        <end position="369"/>
    </location>
</feature>
<feature type="binding site" evidence="2 3 4">
    <location>
        <begin position="14"/>
        <end position="15"/>
    </location>
    <ligand>
        <name>FAD</name>
        <dbReference type="ChEBI" id="CHEBI:57692"/>
    </ligand>
</feature>
<feature type="binding site" evidence="2 3 4">
    <location>
        <begin position="34"/>
        <end position="35"/>
    </location>
    <ligand>
        <name>FAD</name>
        <dbReference type="ChEBI" id="CHEBI:57692"/>
    </ligand>
</feature>
<feature type="binding site" evidence="2 3 4">
    <location>
        <begin position="42"/>
        <end position="43"/>
    </location>
    <ligand>
        <name>FAD</name>
        <dbReference type="ChEBI" id="CHEBI:57692"/>
    </ligand>
</feature>
<feature type="binding site" evidence="2 3 4">
    <location>
        <begin position="47"/>
        <end position="49"/>
    </location>
    <ligand>
        <name>FAD</name>
        <dbReference type="ChEBI" id="CHEBI:57692"/>
    </ligand>
</feature>
<feature type="binding site" evidence="2 3 4">
    <location>
        <position position="174"/>
    </location>
    <ligand>
        <name>FAD</name>
        <dbReference type="ChEBI" id="CHEBI:57692"/>
    </ligand>
</feature>
<feature type="binding site" evidence="2">
    <location>
        <position position="302"/>
    </location>
    <ligand>
        <name>substrate</name>
    </ligand>
</feature>
<feature type="binding site" evidence="2 3 4">
    <location>
        <begin position="327"/>
        <end position="333"/>
    </location>
    <ligand>
        <name>FAD</name>
        <dbReference type="ChEBI" id="CHEBI:57692"/>
    </ligand>
</feature>
<feature type="binding site" evidence="2">
    <location>
        <position position="329"/>
    </location>
    <ligand>
        <name>substrate</name>
    </ligand>
</feature>
<feature type="mutagenesis site" description="130-fold decrease in catalytic efficiency on glycine and 28-fold increase in that on glyphosate." evidence="4">
    <original>G</original>
    <variation>R</variation>
    <location>
        <position position="51"/>
    </location>
</feature>
<feature type="mutagenesis site" description="60-fold decrease in catalytic efficiency on glycine and 210-fold increase in that on glyphosate; when associated with R-54 and A-244." evidence="4">
    <original>G</original>
    <variation>S</variation>
    <location>
        <position position="51"/>
    </location>
</feature>
<feature type="mutagenesis site" description="20-fold decrease in catalytic efficiency on glycine and 34-fold increase in that on glyphosate. 60-fold decrease in catalytic efficiency on glycine and 210-fold increase in that on glyphosate; when associated with S-51 and A-244." evidence="4">
    <original>A</original>
    <variation>R</variation>
    <location>
        <position position="54"/>
    </location>
</feature>
<feature type="mutagenesis site" description="2-fold decrease in catalytic efficiency on glycine and similar catalytic efficiency on glyphosate. 60-fold decrease in catalytic efficiency on glycine and 210-fold increase in that on glyphosate; when associated with S-51 and R-54." evidence="4">
    <original>H</original>
    <variation>A</variation>
    <location>
        <position position="244"/>
    </location>
</feature>
<feature type="strand" evidence="11">
    <location>
        <begin position="3"/>
        <end position="10"/>
    </location>
</feature>
<feature type="helix" evidence="11">
    <location>
        <begin position="14"/>
        <end position="25"/>
    </location>
</feature>
<feature type="strand" evidence="11">
    <location>
        <begin position="30"/>
        <end position="33"/>
    </location>
</feature>
<feature type="strand" evidence="11">
    <location>
        <begin position="35"/>
        <end position="37"/>
    </location>
</feature>
<feature type="turn" evidence="11">
    <location>
        <begin position="38"/>
        <end position="41"/>
    </location>
</feature>
<feature type="helix" evidence="11">
    <location>
        <begin position="42"/>
        <end position="45"/>
    </location>
</feature>
<feature type="helix" evidence="11">
    <location>
        <begin position="52"/>
        <end position="54"/>
    </location>
</feature>
<feature type="helix" evidence="11">
    <location>
        <begin position="61"/>
        <end position="72"/>
    </location>
</feature>
<feature type="turn" evidence="11">
    <location>
        <begin position="73"/>
        <end position="75"/>
    </location>
</feature>
<feature type="helix" evidence="11">
    <location>
        <begin position="76"/>
        <end position="84"/>
    </location>
</feature>
<feature type="strand" evidence="11">
    <location>
        <begin position="95"/>
        <end position="101"/>
    </location>
</feature>
<feature type="helix" evidence="11">
    <location>
        <begin position="102"/>
        <end position="109"/>
    </location>
</feature>
<feature type="turn" evidence="11">
    <location>
        <begin position="110"/>
        <end position="113"/>
    </location>
</feature>
<feature type="strand" evidence="11">
    <location>
        <begin position="117"/>
        <end position="121"/>
    </location>
</feature>
<feature type="helix" evidence="11">
    <location>
        <begin position="122"/>
        <end position="128"/>
    </location>
</feature>
<feature type="strand" evidence="11">
    <location>
        <begin position="138"/>
        <end position="142"/>
    </location>
</feature>
<feature type="helix" evidence="11">
    <location>
        <begin position="150"/>
        <end position="163"/>
    </location>
</feature>
<feature type="strand" evidence="11">
    <location>
        <begin position="167"/>
        <end position="169"/>
    </location>
</feature>
<feature type="strand" evidence="11">
    <location>
        <begin position="176"/>
        <end position="178"/>
    </location>
</feature>
<feature type="strand" evidence="11">
    <location>
        <begin position="180"/>
        <end position="188"/>
    </location>
</feature>
<feature type="strand" evidence="11">
    <location>
        <begin position="191"/>
        <end position="200"/>
    </location>
</feature>
<feature type="helix" evidence="11">
    <location>
        <begin position="203"/>
        <end position="206"/>
    </location>
</feature>
<feature type="helix" evidence="11">
    <location>
        <begin position="207"/>
        <end position="212"/>
    </location>
</feature>
<feature type="strand" evidence="11">
    <location>
        <begin position="220"/>
        <end position="230"/>
    </location>
</feature>
<feature type="strand" evidence="12">
    <location>
        <begin position="232"/>
        <end position="234"/>
    </location>
</feature>
<feature type="strand" evidence="11">
    <location>
        <begin position="238"/>
        <end position="242"/>
    </location>
</feature>
<feature type="strand" evidence="11">
    <location>
        <begin position="245"/>
        <end position="249"/>
    </location>
</feature>
<feature type="strand" evidence="11">
    <location>
        <begin position="253"/>
        <end position="258"/>
    </location>
</feature>
<feature type="helix" evidence="11">
    <location>
        <begin position="272"/>
        <end position="285"/>
    </location>
</feature>
<feature type="helix" evidence="11">
    <location>
        <begin position="287"/>
        <end position="291"/>
    </location>
</feature>
<feature type="strand" evidence="11">
    <location>
        <begin position="292"/>
        <end position="304"/>
    </location>
</feature>
<feature type="strand" evidence="11">
    <location>
        <begin position="306"/>
        <end position="308"/>
    </location>
</feature>
<feature type="strand" evidence="11">
    <location>
        <begin position="311"/>
        <end position="315"/>
    </location>
</feature>
<feature type="strand" evidence="11">
    <location>
        <begin position="318"/>
        <end position="325"/>
    </location>
</feature>
<feature type="turn" evidence="11">
    <location>
        <begin position="331"/>
        <end position="334"/>
    </location>
</feature>
<feature type="helix" evidence="11">
    <location>
        <begin position="335"/>
        <end position="346"/>
    </location>
</feature>
<feature type="helix" evidence="11">
    <location>
        <begin position="353"/>
        <end position="358"/>
    </location>
</feature>
<sequence length="369" mass="40937">MKRHYEAVVIGGGIIGSAIAYYLAKENKNTALFESGTMGGRTTSAAAGMLGAHAECEERDAFFDFAMHSQRLYKGLGEELYALSGVDIRQHNGGMFKLAFSEEDVLQLRQMDDLDSVSWYSKEEVLEKEPYASGDIFGASFIQDDVHVEPYFVCKAYVKAAKMLGAEIFEHTPVLHVERDGEALFIKTPSGDVWANHVVVASGVWSGMFFKQLGLNNAFLPVKGECLSVWNDDIPLTKTLYHDHCYIVPRKSGRLVVGATMKPGDWSETPDLGGLESVMKKAKTMLPAIQNMKVDRFWAGLRPGTKDGKPYIGRHPEDSRILFAAGHFRNGILLAPATGALISDLIMNKEVNQDWLHAFRIDRKEAVQI</sequence>
<organism>
    <name type="scientific">Bacillus subtilis (strain 168)</name>
    <dbReference type="NCBI Taxonomy" id="224308"/>
    <lineage>
        <taxon>Bacteria</taxon>
        <taxon>Bacillati</taxon>
        <taxon>Bacillota</taxon>
        <taxon>Bacilli</taxon>
        <taxon>Bacillales</taxon>
        <taxon>Bacillaceae</taxon>
        <taxon>Bacillus</taxon>
    </lineage>
</organism>
<proteinExistence type="evidence at protein level"/>
<evidence type="ECO:0000269" key="1">
    <source>
    </source>
</evidence>
<evidence type="ECO:0000269" key="2">
    <source>
    </source>
</evidence>
<evidence type="ECO:0000269" key="3">
    <source>
    </source>
</evidence>
<evidence type="ECO:0000269" key="4">
    <source>
    </source>
</evidence>
<evidence type="ECO:0000269" key="5">
    <source>
    </source>
</evidence>
<evidence type="ECO:0000303" key="6">
    <source>
    </source>
</evidence>
<evidence type="ECO:0000303" key="7">
    <source>
    </source>
</evidence>
<evidence type="ECO:0000303" key="8">
    <source>
    </source>
</evidence>
<evidence type="ECO:0000305" key="9"/>
<evidence type="ECO:0000305" key="10">
    <source>
    </source>
</evidence>
<evidence type="ECO:0007829" key="11">
    <source>
        <dbReference type="PDB" id="1RYI"/>
    </source>
</evidence>
<evidence type="ECO:0007829" key="12">
    <source>
        <dbReference type="PDB" id="3IF9"/>
    </source>
</evidence>
<name>GLYOX_BACSU</name>
<protein>
    <recommendedName>
        <fullName evidence="6 8">Glycine oxidase</fullName>
        <shortName evidence="6">GO</shortName>
        <ecNumber evidence="1 4 5">1.4.3.19</ecNumber>
    </recommendedName>
</protein>
<keyword id="KW-0002">3D-structure</keyword>
<keyword id="KW-0963">Cytoplasm</keyword>
<keyword id="KW-0274">FAD</keyword>
<keyword id="KW-0285">Flavoprotein</keyword>
<keyword id="KW-0359">Herbicide resistance</keyword>
<keyword id="KW-0560">Oxidoreductase</keyword>
<keyword id="KW-1185">Reference proteome</keyword>
<keyword id="KW-0784">Thiamine biosynthesis</keyword>
<dbReference type="EC" id="1.4.3.19" evidence="1 4 5"/>
<dbReference type="EMBL" id="AL009126">
    <property type="protein sequence ID" value="CAB13024.1"/>
    <property type="molecule type" value="Genomic_DNA"/>
</dbReference>
<dbReference type="PIR" id="B69845">
    <property type="entry name" value="B69845"/>
</dbReference>
<dbReference type="RefSeq" id="NP_389049.1">
    <property type="nucleotide sequence ID" value="NC_000964.3"/>
</dbReference>
<dbReference type="RefSeq" id="WP_003245044.1">
    <property type="nucleotide sequence ID" value="NZ_OZ025638.1"/>
</dbReference>
<dbReference type="PDB" id="1NG3">
    <property type="method" value="X-ray"/>
    <property type="resolution" value="2.60 A"/>
    <property type="chains" value="A/B=1-369"/>
</dbReference>
<dbReference type="PDB" id="1NG4">
    <property type="method" value="X-ray"/>
    <property type="resolution" value="2.30 A"/>
    <property type="chains" value="A/B=1-369"/>
</dbReference>
<dbReference type="PDB" id="1RYI">
    <property type="method" value="X-ray"/>
    <property type="resolution" value="1.80 A"/>
    <property type="chains" value="A/B/C/D=1-367"/>
</dbReference>
<dbReference type="PDB" id="3IF9">
    <property type="method" value="X-ray"/>
    <property type="resolution" value="2.60 A"/>
    <property type="chains" value="A/B/C/D=1-369"/>
</dbReference>
<dbReference type="PDBsum" id="1NG3"/>
<dbReference type="PDBsum" id="1NG4"/>
<dbReference type="PDBsum" id="1RYI"/>
<dbReference type="PDBsum" id="3IF9"/>
<dbReference type="SMR" id="O31616"/>
<dbReference type="FunCoup" id="O31616">
    <property type="interactions" value="574"/>
</dbReference>
<dbReference type="STRING" id="224308.BSU11670"/>
<dbReference type="DrugBank" id="DB02713">
    <property type="generic name" value="Acetylamino-Acetic Acid"/>
</dbReference>
<dbReference type="DrugBank" id="DB03147">
    <property type="generic name" value="Flavin adenine dinucleotide"/>
</dbReference>
<dbReference type="PaxDb" id="224308-BSU11670"/>
<dbReference type="EnsemblBacteria" id="CAB13024">
    <property type="protein sequence ID" value="CAB13024"/>
    <property type="gene ID" value="BSU_11670"/>
</dbReference>
<dbReference type="GeneID" id="939377"/>
<dbReference type="KEGG" id="bsu:BSU11670"/>
<dbReference type="PATRIC" id="fig|224308.179.peg.1256"/>
<dbReference type="eggNOG" id="COG0665">
    <property type="taxonomic scope" value="Bacteria"/>
</dbReference>
<dbReference type="InParanoid" id="O31616"/>
<dbReference type="OrthoDB" id="9794226at2"/>
<dbReference type="PhylomeDB" id="O31616"/>
<dbReference type="BioCyc" id="BSUB:BSU11670-MONOMER"/>
<dbReference type="BioCyc" id="MetaCyc:BSU11670-MONOMER"/>
<dbReference type="BRENDA" id="1.4.3.19">
    <property type="organism ID" value="658"/>
</dbReference>
<dbReference type="SABIO-RK" id="O31616"/>
<dbReference type="UniPathway" id="UPA00060"/>
<dbReference type="EvolutionaryTrace" id="O31616"/>
<dbReference type="Proteomes" id="UP000001570">
    <property type="component" value="Chromosome"/>
</dbReference>
<dbReference type="GO" id="GO:0005737">
    <property type="term" value="C:cytoplasm"/>
    <property type="evidence" value="ECO:0000318"/>
    <property type="project" value="GO_Central"/>
</dbReference>
<dbReference type="GO" id="GO:0071949">
    <property type="term" value="F:FAD binding"/>
    <property type="evidence" value="ECO:0000314"/>
    <property type="project" value="UniProtKB"/>
</dbReference>
<dbReference type="GO" id="GO:0043799">
    <property type="term" value="F:glycine oxidase activity"/>
    <property type="evidence" value="ECO:0000314"/>
    <property type="project" value="UniProtKB"/>
</dbReference>
<dbReference type="GO" id="GO:0006520">
    <property type="term" value="P:amino acid metabolic process"/>
    <property type="evidence" value="ECO:0000314"/>
    <property type="project" value="UniProtKB"/>
</dbReference>
<dbReference type="GO" id="GO:0009635">
    <property type="term" value="P:response to herbicide"/>
    <property type="evidence" value="ECO:0007669"/>
    <property type="project" value="UniProtKB-KW"/>
</dbReference>
<dbReference type="GO" id="GO:0009228">
    <property type="term" value="P:thiamine biosynthetic process"/>
    <property type="evidence" value="ECO:0000315"/>
    <property type="project" value="UniProtKB"/>
</dbReference>
<dbReference type="GO" id="GO:0009229">
    <property type="term" value="P:thiamine diphosphate biosynthetic process"/>
    <property type="evidence" value="ECO:0007669"/>
    <property type="project" value="UniProtKB-UniPathway"/>
</dbReference>
<dbReference type="Gene3D" id="3.30.9.10">
    <property type="entry name" value="D-Amino Acid Oxidase, subunit A, domain 2"/>
    <property type="match status" value="1"/>
</dbReference>
<dbReference type="Gene3D" id="3.50.50.60">
    <property type="entry name" value="FAD/NAD(P)-binding domain"/>
    <property type="match status" value="1"/>
</dbReference>
<dbReference type="InterPro" id="IPR006076">
    <property type="entry name" value="FAD-dep_OxRdtase"/>
</dbReference>
<dbReference type="InterPro" id="IPR036188">
    <property type="entry name" value="FAD/NAD-bd_sf"/>
</dbReference>
<dbReference type="InterPro" id="IPR012727">
    <property type="entry name" value="Gly_oxidase_ThiO"/>
</dbReference>
<dbReference type="NCBIfam" id="TIGR02352">
    <property type="entry name" value="thiamin_ThiO"/>
    <property type="match status" value="1"/>
</dbReference>
<dbReference type="PANTHER" id="PTHR13847:SF289">
    <property type="entry name" value="GLYCINE OXIDASE"/>
    <property type="match status" value="1"/>
</dbReference>
<dbReference type="PANTHER" id="PTHR13847">
    <property type="entry name" value="SARCOSINE DEHYDROGENASE-RELATED"/>
    <property type="match status" value="1"/>
</dbReference>
<dbReference type="Pfam" id="PF01266">
    <property type="entry name" value="DAO"/>
    <property type="match status" value="1"/>
</dbReference>
<dbReference type="SUPFAM" id="SSF54373">
    <property type="entry name" value="FAD-linked reductases, C-terminal domain"/>
    <property type="match status" value="1"/>
</dbReference>
<dbReference type="SUPFAM" id="SSF51905">
    <property type="entry name" value="FAD/NAD(P)-binding domain"/>
    <property type="match status" value="1"/>
</dbReference>
<gene>
    <name evidence="7" type="primary">thiO</name>
    <name evidence="8" type="synonym">goxB</name>
    <name evidence="8" type="synonym">yjbR</name>
    <name type="ordered locus">BSU11670</name>
</gene>
<accession>O31616</accession>